<organism>
    <name type="scientific">Mus musculus</name>
    <name type="common">Mouse</name>
    <dbReference type="NCBI Taxonomy" id="10090"/>
    <lineage>
        <taxon>Eukaryota</taxon>
        <taxon>Metazoa</taxon>
        <taxon>Chordata</taxon>
        <taxon>Craniata</taxon>
        <taxon>Vertebrata</taxon>
        <taxon>Euteleostomi</taxon>
        <taxon>Mammalia</taxon>
        <taxon>Eutheria</taxon>
        <taxon>Euarchontoglires</taxon>
        <taxon>Glires</taxon>
        <taxon>Rodentia</taxon>
        <taxon>Myomorpha</taxon>
        <taxon>Muroidea</taxon>
        <taxon>Muridae</taxon>
        <taxon>Murinae</taxon>
        <taxon>Mus</taxon>
        <taxon>Mus</taxon>
    </lineage>
</organism>
<reference key="1">
    <citation type="submission" date="1999-11" db="EMBL/GenBank/DDBJ databases">
        <authorList>
            <person name="Mehus J.G."/>
            <person name="Johnson J.D."/>
            <person name="Lambeth D.O."/>
        </authorList>
    </citation>
    <scope>NUCLEOTIDE SEQUENCE [MRNA]</scope>
</reference>
<reference key="2">
    <citation type="journal article" date="2010" name="Cell">
        <title>A tissue-specific atlas of mouse protein phosphorylation and expression.</title>
        <authorList>
            <person name="Huttlin E.L."/>
            <person name="Jedrychowski M.P."/>
            <person name="Elias J.E."/>
            <person name="Goswami T."/>
            <person name="Rad R."/>
            <person name="Beausoleil S.A."/>
            <person name="Villen J."/>
            <person name="Haas W."/>
            <person name="Sowa M.E."/>
            <person name="Gygi S.P."/>
        </authorList>
    </citation>
    <scope>IDENTIFICATION BY MASS SPECTROMETRY [LARGE SCALE ANALYSIS]</scope>
    <source>
        <tissue>Kidney</tissue>
        <tissue>Spleen</tissue>
        <tissue>Testis</tissue>
    </source>
</reference>
<reference key="3">
    <citation type="journal article" date="2005" name="Science">
        <title>The transcriptional landscape of the mammalian genome.</title>
        <authorList>
            <person name="Carninci P."/>
            <person name="Kasukawa T."/>
            <person name="Katayama S."/>
            <person name="Gough J."/>
            <person name="Frith M.C."/>
            <person name="Maeda N."/>
            <person name="Oyama R."/>
            <person name="Ravasi T."/>
            <person name="Lenhard B."/>
            <person name="Wells C."/>
            <person name="Kodzius R."/>
            <person name="Shimokawa K."/>
            <person name="Bajic V.B."/>
            <person name="Brenner S.E."/>
            <person name="Batalov S."/>
            <person name="Forrest A.R."/>
            <person name="Zavolan M."/>
            <person name="Davis M.J."/>
            <person name="Wilming L.G."/>
            <person name="Aidinis V."/>
            <person name="Allen J.E."/>
            <person name="Ambesi-Impiombato A."/>
            <person name="Apweiler R."/>
            <person name="Aturaliya R.N."/>
            <person name="Bailey T.L."/>
            <person name="Bansal M."/>
            <person name="Baxter L."/>
            <person name="Beisel K.W."/>
            <person name="Bersano T."/>
            <person name="Bono H."/>
            <person name="Chalk A.M."/>
            <person name="Chiu K.P."/>
            <person name="Choudhary V."/>
            <person name="Christoffels A."/>
            <person name="Clutterbuck D.R."/>
            <person name="Crowe M.L."/>
            <person name="Dalla E."/>
            <person name="Dalrymple B.P."/>
            <person name="de Bono B."/>
            <person name="Della Gatta G."/>
            <person name="di Bernardo D."/>
            <person name="Down T."/>
            <person name="Engstrom P."/>
            <person name="Fagiolini M."/>
            <person name="Faulkner G."/>
            <person name="Fletcher C.F."/>
            <person name="Fukushima T."/>
            <person name="Furuno M."/>
            <person name="Futaki S."/>
            <person name="Gariboldi M."/>
            <person name="Georgii-Hemming P."/>
            <person name="Gingeras T.R."/>
            <person name="Gojobori T."/>
            <person name="Green R.E."/>
            <person name="Gustincich S."/>
            <person name="Harbers M."/>
            <person name="Hayashi Y."/>
            <person name="Hensch T.K."/>
            <person name="Hirokawa N."/>
            <person name="Hill D."/>
            <person name="Huminiecki L."/>
            <person name="Iacono M."/>
            <person name="Ikeo K."/>
            <person name="Iwama A."/>
            <person name="Ishikawa T."/>
            <person name="Jakt M."/>
            <person name="Kanapin A."/>
            <person name="Katoh M."/>
            <person name="Kawasawa Y."/>
            <person name="Kelso J."/>
            <person name="Kitamura H."/>
            <person name="Kitano H."/>
            <person name="Kollias G."/>
            <person name="Krishnan S.P."/>
            <person name="Kruger A."/>
            <person name="Kummerfeld S.K."/>
            <person name="Kurochkin I.V."/>
            <person name="Lareau L.F."/>
            <person name="Lazarevic D."/>
            <person name="Lipovich L."/>
            <person name="Liu J."/>
            <person name="Liuni S."/>
            <person name="McWilliam S."/>
            <person name="Madan Babu M."/>
            <person name="Madera M."/>
            <person name="Marchionni L."/>
            <person name="Matsuda H."/>
            <person name="Matsuzawa S."/>
            <person name="Miki H."/>
            <person name="Mignone F."/>
            <person name="Miyake S."/>
            <person name="Morris K."/>
            <person name="Mottagui-Tabar S."/>
            <person name="Mulder N."/>
            <person name="Nakano N."/>
            <person name="Nakauchi H."/>
            <person name="Ng P."/>
            <person name="Nilsson R."/>
            <person name="Nishiguchi S."/>
            <person name="Nishikawa S."/>
            <person name="Nori F."/>
            <person name="Ohara O."/>
            <person name="Okazaki Y."/>
            <person name="Orlando V."/>
            <person name="Pang K.C."/>
            <person name="Pavan W.J."/>
            <person name="Pavesi G."/>
            <person name="Pesole G."/>
            <person name="Petrovsky N."/>
            <person name="Piazza S."/>
            <person name="Reed J."/>
            <person name="Reid J.F."/>
            <person name="Ring B.Z."/>
            <person name="Ringwald M."/>
            <person name="Rost B."/>
            <person name="Ruan Y."/>
            <person name="Salzberg S.L."/>
            <person name="Sandelin A."/>
            <person name="Schneider C."/>
            <person name="Schoenbach C."/>
            <person name="Sekiguchi K."/>
            <person name="Semple C.A."/>
            <person name="Seno S."/>
            <person name="Sessa L."/>
            <person name="Sheng Y."/>
            <person name="Shibata Y."/>
            <person name="Shimada H."/>
            <person name="Shimada K."/>
            <person name="Silva D."/>
            <person name="Sinclair B."/>
            <person name="Sperling S."/>
            <person name="Stupka E."/>
            <person name="Sugiura K."/>
            <person name="Sultana R."/>
            <person name="Takenaka Y."/>
            <person name="Taki K."/>
            <person name="Tammoja K."/>
            <person name="Tan S.L."/>
            <person name="Tang S."/>
            <person name="Taylor M.S."/>
            <person name="Tegner J."/>
            <person name="Teichmann S.A."/>
            <person name="Ueda H.R."/>
            <person name="van Nimwegen E."/>
            <person name="Verardo R."/>
            <person name="Wei C.L."/>
            <person name="Yagi K."/>
            <person name="Yamanishi H."/>
            <person name="Zabarovsky E."/>
            <person name="Zhu S."/>
            <person name="Zimmer A."/>
            <person name="Hide W."/>
            <person name="Bult C."/>
            <person name="Grimmond S.M."/>
            <person name="Teasdale R.D."/>
            <person name="Liu E.T."/>
            <person name="Brusic V."/>
            <person name="Quackenbush J."/>
            <person name="Wahlestedt C."/>
            <person name="Mattick J.S."/>
            <person name="Hume D.A."/>
            <person name="Kai C."/>
            <person name="Sasaki D."/>
            <person name="Tomaru Y."/>
            <person name="Fukuda S."/>
            <person name="Kanamori-Katayama M."/>
            <person name="Suzuki M."/>
            <person name="Aoki J."/>
            <person name="Arakawa T."/>
            <person name="Iida J."/>
            <person name="Imamura K."/>
            <person name="Itoh M."/>
            <person name="Kato T."/>
            <person name="Kawaji H."/>
            <person name="Kawagashira N."/>
            <person name="Kawashima T."/>
            <person name="Kojima M."/>
            <person name="Kondo S."/>
            <person name="Konno H."/>
            <person name="Nakano K."/>
            <person name="Ninomiya N."/>
            <person name="Nishio T."/>
            <person name="Okada M."/>
            <person name="Plessy C."/>
            <person name="Shibata K."/>
            <person name="Shiraki T."/>
            <person name="Suzuki S."/>
            <person name="Tagami M."/>
            <person name="Waki K."/>
            <person name="Watahiki A."/>
            <person name="Okamura-Oho Y."/>
            <person name="Suzuki H."/>
            <person name="Kawai J."/>
            <person name="Hayashizaki Y."/>
        </authorList>
    </citation>
    <scope>NUCLEOTIDE SEQUENCE [LARGE SCALE MRNA]</scope>
    <source>
        <strain>C57BL/6J</strain>
        <tissue>Mammary gland</tissue>
        <tissue>Testis</tissue>
    </source>
</reference>
<reference key="4">
    <citation type="journal article" date="2009" name="PLoS Biol.">
        <title>Lineage-specific biology revealed by a finished genome assembly of the mouse.</title>
        <authorList>
            <person name="Church D.M."/>
            <person name="Goodstadt L."/>
            <person name="Hillier L.W."/>
            <person name="Zody M.C."/>
            <person name="Goldstein S."/>
            <person name="She X."/>
            <person name="Bult C.J."/>
            <person name="Agarwala R."/>
            <person name="Cherry J.L."/>
            <person name="DiCuccio M."/>
            <person name="Hlavina W."/>
            <person name="Kapustin Y."/>
            <person name="Meric P."/>
            <person name="Maglott D."/>
            <person name="Birtle Z."/>
            <person name="Marques A.C."/>
            <person name="Graves T."/>
            <person name="Zhou S."/>
            <person name="Teague B."/>
            <person name="Potamousis K."/>
            <person name="Churas C."/>
            <person name="Place M."/>
            <person name="Herschleb J."/>
            <person name="Runnheim R."/>
            <person name="Forrest D."/>
            <person name="Amos-Landgraf J."/>
            <person name="Schwartz D.C."/>
            <person name="Cheng Z."/>
            <person name="Lindblad-Toh K."/>
            <person name="Eichler E.E."/>
            <person name="Ponting C.P."/>
        </authorList>
    </citation>
    <scope>NUCLEOTIDE SEQUENCE [LARGE SCALE GENOMIC DNA]</scope>
    <source>
        <strain>C57BL/6J</strain>
    </source>
</reference>
<reference key="5">
    <citation type="journal article" date="2010" name="Vet. Pathol.">
        <title>Situs inversus in Dpcd/Poll-/-, Nme7-/-, and Pkd1l1-/- mice.</title>
        <authorList>
            <person name="Vogel P."/>
            <person name="Read R."/>
            <person name="Hansen G.M."/>
            <person name="Freay L.C."/>
            <person name="Zambrowicz B.P."/>
            <person name="Sands A.T."/>
        </authorList>
    </citation>
    <scope>DISRUPTION PHENOTYPE</scope>
</reference>
<reference evidence="10" key="6">
    <citation type="journal article" date="2023" name="Cell">
        <title>Structures of sperm flagellar doublet microtubules expand the genetic spectrum of male infertility.</title>
        <authorList>
            <person name="Zhou L."/>
            <person name="Liu H."/>
            <person name="Liu S."/>
            <person name="Yang X."/>
            <person name="Dong Y."/>
            <person name="Pan Y."/>
            <person name="Xiao Z."/>
            <person name="Zheng B."/>
            <person name="Sun Y."/>
            <person name="Huang P."/>
            <person name="Zhang X."/>
            <person name="Hu J."/>
            <person name="Sun R."/>
            <person name="Feng S."/>
            <person name="Zhu Y."/>
            <person name="Liu M."/>
            <person name="Gui M."/>
            <person name="Wu J."/>
        </authorList>
    </citation>
    <scope>STRUCTURE BY ELECTRON MICROSCOPY (3.50 ANGSTROMS) OF SPERM FLAGELLAR DOUBLET MICROTUBULES</scope>
    <scope>SUBUNIT</scope>
    <scope>SUBCELLULAR LOCATION</scope>
</reference>
<reference evidence="11" key="7">
    <citation type="journal article" date="2023" name="Cell">
        <title>De novo protein identification in mammalian sperm using in situ cryoelectron tomography and AlphaFold2 docking.</title>
        <authorList>
            <person name="Chen Z."/>
            <person name="Shiozaki M."/>
            <person name="Haas K.M."/>
            <person name="Skinner W.M."/>
            <person name="Zhao S."/>
            <person name="Guo C."/>
            <person name="Polacco B.J."/>
            <person name="Yu Z."/>
            <person name="Krogan N.J."/>
            <person name="Lishko P.V."/>
            <person name="Kaake R.M."/>
            <person name="Vale R.D."/>
            <person name="Agard D.A."/>
        </authorList>
    </citation>
    <scope>STRUCTURE BY ELECTRON MICROSCOPY (7.70 ANGSTROMS) OF SPERM FLAGELLAR DOUBLET MICROTUBULES</scope>
    <scope>FUNCTION</scope>
    <scope>SUBCELLULAR LOCATION</scope>
    <scope>SUBUNIT</scope>
</reference>
<reference evidence="9" key="8">
    <citation type="journal article" date="2023" name="Cell Discov.">
        <title>In-cell structural insight into the stability of sperm microtubule doublet.</title>
        <authorList>
            <person name="Tai L."/>
            <person name="Yin G."/>
            <person name="Huang X."/>
            <person name="Sun F."/>
            <person name="Zhu Y."/>
        </authorList>
    </citation>
    <scope>STRUCTURE BY ELECTRON MICROSCOPY (4.50 ANGSTROMS)</scope>
    <scope>FUNCTION</scope>
    <scope>SUBUNIT</scope>
    <scope>SUBCELLULAR LOCATION</scope>
</reference>
<proteinExistence type="evidence at protein level"/>
<keyword id="KW-0002">3D-structure</keyword>
<keyword id="KW-0966">Cell projection</keyword>
<keyword id="KW-0969">Cilium</keyword>
<keyword id="KW-0963">Cytoplasm</keyword>
<keyword id="KW-0206">Cytoskeleton</keyword>
<keyword id="KW-0282">Flagellum</keyword>
<keyword id="KW-0378">Hydrolase</keyword>
<keyword id="KW-0418">Kinase</keyword>
<keyword id="KW-0460">Magnesium</keyword>
<keyword id="KW-0479">Metal-binding</keyword>
<keyword id="KW-0539">Nucleus</keyword>
<keyword id="KW-1185">Reference proteome</keyword>
<keyword id="KW-0808">Transferase</keyword>
<dbReference type="EC" id="3.1.-.-" evidence="1"/>
<dbReference type="EC" id="2.7.-.-" evidence="1"/>
<dbReference type="EMBL" id="AF202048">
    <property type="protein sequence ID" value="AAF20906.1"/>
    <property type="molecule type" value="mRNA"/>
</dbReference>
<dbReference type="EMBL" id="AK133221">
    <property type="protein sequence ID" value="BAE21565.1"/>
    <property type="molecule type" value="mRNA"/>
</dbReference>
<dbReference type="EMBL" id="AK144915">
    <property type="protein sequence ID" value="BAE26132.1"/>
    <property type="molecule type" value="mRNA"/>
</dbReference>
<dbReference type="CCDS" id="CCDS15436.2"/>
<dbReference type="RefSeq" id="NP_001280242.1">
    <property type="nucleotide sequence ID" value="NM_001293313.1"/>
</dbReference>
<dbReference type="RefSeq" id="NP_612187.2">
    <property type="nucleotide sequence ID" value="NM_138314.4"/>
</dbReference>
<dbReference type="RefSeq" id="NP_835172.1">
    <property type="nucleotide sequence ID" value="NM_178071.6"/>
</dbReference>
<dbReference type="PDB" id="8I7R">
    <property type="method" value="EM"/>
    <property type="resolution" value="6.50 A"/>
    <property type="chains" value="C/D=1-395"/>
</dbReference>
<dbReference type="PDB" id="8IYJ">
    <property type="method" value="EM"/>
    <property type="resolution" value="3.50 A"/>
    <property type="chains" value="5/6/j1=1-395"/>
</dbReference>
<dbReference type="PDB" id="8TO0">
    <property type="method" value="EM"/>
    <property type="resolution" value="7.70 A"/>
    <property type="chains" value="5/6=1-395"/>
</dbReference>
<dbReference type="PDBsum" id="8I7R"/>
<dbReference type="PDBsum" id="8IYJ"/>
<dbReference type="PDBsum" id="8TO0"/>
<dbReference type="EMDB" id="EMD-35230"/>
<dbReference type="EMDB" id="EMD-35823"/>
<dbReference type="EMDB" id="EMD-41431"/>
<dbReference type="SMR" id="Q9QXL8"/>
<dbReference type="FunCoup" id="Q9QXL8">
    <property type="interactions" value="370"/>
</dbReference>
<dbReference type="IntAct" id="Q9QXL8">
    <property type="interactions" value="1"/>
</dbReference>
<dbReference type="MINT" id="Q9QXL8"/>
<dbReference type="STRING" id="10090.ENSMUSP00000141963"/>
<dbReference type="iPTMnet" id="Q9QXL8"/>
<dbReference type="PhosphoSitePlus" id="Q9QXL8"/>
<dbReference type="REPRODUCTION-2DPAGE" id="Q9QXL8"/>
<dbReference type="PaxDb" id="10090-ENSMUSP00000083192"/>
<dbReference type="ProteomicsDB" id="293638"/>
<dbReference type="ProteomicsDB" id="343352"/>
<dbReference type="Pumba" id="Q9QXL8"/>
<dbReference type="Antibodypedia" id="34356">
    <property type="antibodies" value="158 antibodies from 26 providers"/>
</dbReference>
<dbReference type="DNASU" id="171567"/>
<dbReference type="Ensembl" id="ENSMUST00000191947.6">
    <property type="protein sequence ID" value="ENSMUSP00000141431.2"/>
    <property type="gene ID" value="ENSMUSG00000026575.16"/>
</dbReference>
<dbReference type="Ensembl" id="ENSMUST00000193683.6">
    <property type="protein sequence ID" value="ENSMUSP00000141963.2"/>
    <property type="gene ID" value="ENSMUSG00000026575.16"/>
</dbReference>
<dbReference type="Ensembl" id="ENSMUST00000193808.6">
    <property type="protein sequence ID" value="ENSMUSP00000141771.2"/>
    <property type="gene ID" value="ENSMUSG00000026575.16"/>
</dbReference>
<dbReference type="GeneID" id="171567"/>
<dbReference type="KEGG" id="mmu:171567"/>
<dbReference type="AGR" id="MGI:2449121"/>
<dbReference type="CTD" id="29922"/>
<dbReference type="MGI" id="MGI:2449121">
    <property type="gene designation" value="Nme7"/>
</dbReference>
<dbReference type="VEuPathDB" id="HostDB:ENSMUSG00000026575"/>
<dbReference type="eggNOG" id="KOG0888">
    <property type="taxonomic scope" value="Eukaryota"/>
</dbReference>
<dbReference type="GeneTree" id="ENSGT00940000158946"/>
<dbReference type="HOGENOM" id="CLU_060216_3_1_1"/>
<dbReference type="InParanoid" id="Q9QXL8"/>
<dbReference type="OMA" id="VCMCLEI"/>
<dbReference type="OrthoDB" id="270127at2759"/>
<dbReference type="PhylomeDB" id="Q9QXL8"/>
<dbReference type="Reactome" id="R-MMU-380270">
    <property type="pathway name" value="Recruitment of mitotic centrosome proteins and complexes"/>
</dbReference>
<dbReference type="Reactome" id="R-MMU-380320">
    <property type="pathway name" value="Recruitment of NuMA to mitotic centrosomes"/>
</dbReference>
<dbReference type="BioGRID-ORCS" id="171567">
    <property type="hits" value="3 hits in 78 CRISPR screens"/>
</dbReference>
<dbReference type="ChiTaRS" id="Nme7">
    <property type="organism name" value="mouse"/>
</dbReference>
<dbReference type="PRO" id="PR:Q9QXL8"/>
<dbReference type="Proteomes" id="UP000000589">
    <property type="component" value="Chromosome 1"/>
</dbReference>
<dbReference type="RNAct" id="Q9QXL8">
    <property type="molecule type" value="protein"/>
</dbReference>
<dbReference type="Bgee" id="ENSMUSG00000026575">
    <property type="expression patterns" value="Expressed in spermatid and 256 other cell types or tissues"/>
</dbReference>
<dbReference type="GO" id="GO:0160111">
    <property type="term" value="C:axonemal A tubule inner sheath"/>
    <property type="evidence" value="ECO:0000314"/>
    <property type="project" value="UniProtKB"/>
</dbReference>
<dbReference type="GO" id="GO:0005879">
    <property type="term" value="C:axonemal microtubule"/>
    <property type="evidence" value="ECO:0000314"/>
    <property type="project" value="UniProtKB"/>
</dbReference>
<dbReference type="GO" id="GO:0005813">
    <property type="term" value="C:centrosome"/>
    <property type="evidence" value="ECO:0000314"/>
    <property type="project" value="MGI"/>
</dbReference>
<dbReference type="GO" id="GO:0036064">
    <property type="term" value="C:ciliary basal body"/>
    <property type="evidence" value="ECO:0000314"/>
    <property type="project" value="MGI"/>
</dbReference>
<dbReference type="GO" id="GO:0005829">
    <property type="term" value="C:cytosol"/>
    <property type="evidence" value="ECO:0007669"/>
    <property type="project" value="Ensembl"/>
</dbReference>
<dbReference type="GO" id="GO:0005576">
    <property type="term" value="C:extracellular region"/>
    <property type="evidence" value="ECO:0007669"/>
    <property type="project" value="GOC"/>
</dbReference>
<dbReference type="GO" id="GO:0000931">
    <property type="term" value="C:gamma-tubulin ring complex"/>
    <property type="evidence" value="ECO:0000250"/>
    <property type="project" value="UniProtKB"/>
</dbReference>
<dbReference type="GO" id="GO:0005654">
    <property type="term" value="C:nucleoplasm"/>
    <property type="evidence" value="ECO:0007669"/>
    <property type="project" value="Ensembl"/>
</dbReference>
<dbReference type="GO" id="GO:0005634">
    <property type="term" value="C:nucleus"/>
    <property type="evidence" value="ECO:0000250"/>
    <property type="project" value="UniProtKB"/>
</dbReference>
<dbReference type="GO" id="GO:0005886">
    <property type="term" value="C:plasma membrane"/>
    <property type="evidence" value="ECO:0007669"/>
    <property type="project" value="GOC"/>
</dbReference>
<dbReference type="GO" id="GO:0036126">
    <property type="term" value="C:sperm flagellum"/>
    <property type="evidence" value="ECO:0000314"/>
    <property type="project" value="UniProtKB"/>
</dbReference>
<dbReference type="GO" id="GO:0005819">
    <property type="term" value="C:spindle"/>
    <property type="evidence" value="ECO:0007669"/>
    <property type="project" value="UniProtKB-SubCell"/>
</dbReference>
<dbReference type="GO" id="GO:0008408">
    <property type="term" value="F:3'-5' exonuclease activity"/>
    <property type="evidence" value="ECO:0000250"/>
    <property type="project" value="UniProtKB"/>
</dbReference>
<dbReference type="GO" id="GO:0005524">
    <property type="term" value="F:ATP binding"/>
    <property type="evidence" value="ECO:0007669"/>
    <property type="project" value="InterPro"/>
</dbReference>
<dbReference type="GO" id="GO:0046872">
    <property type="term" value="F:metal ion binding"/>
    <property type="evidence" value="ECO:0007669"/>
    <property type="project" value="UniProtKB-KW"/>
</dbReference>
<dbReference type="GO" id="GO:0004550">
    <property type="term" value="F:nucleoside diphosphate kinase activity"/>
    <property type="evidence" value="ECO:0007669"/>
    <property type="project" value="UniProtKB-EC"/>
</dbReference>
<dbReference type="GO" id="GO:0004672">
    <property type="term" value="F:protein kinase activity"/>
    <property type="evidence" value="ECO:0007669"/>
    <property type="project" value="Ensembl"/>
</dbReference>
<dbReference type="GO" id="GO:0007420">
    <property type="term" value="P:brain development"/>
    <property type="evidence" value="ECO:0000315"/>
    <property type="project" value="MGI"/>
</dbReference>
<dbReference type="GO" id="GO:1990830">
    <property type="term" value="P:cellular response to leukemia inhibitory factor"/>
    <property type="evidence" value="ECO:0000270"/>
    <property type="project" value="MGI"/>
</dbReference>
<dbReference type="GO" id="GO:0006241">
    <property type="term" value="P:CTP biosynthetic process"/>
    <property type="evidence" value="ECO:0007669"/>
    <property type="project" value="InterPro"/>
</dbReference>
<dbReference type="GO" id="GO:0007368">
    <property type="term" value="P:determination of left/right symmetry"/>
    <property type="evidence" value="ECO:0000315"/>
    <property type="project" value="MGI"/>
</dbReference>
<dbReference type="GO" id="GO:0003351">
    <property type="term" value="P:epithelial cilium movement involved in extracellular fluid movement"/>
    <property type="evidence" value="ECO:0000315"/>
    <property type="project" value="MGI"/>
</dbReference>
<dbReference type="GO" id="GO:0030317">
    <property type="term" value="P:flagellated sperm motility"/>
    <property type="evidence" value="ECO:0000314"/>
    <property type="project" value="UniProtKB"/>
</dbReference>
<dbReference type="GO" id="GO:0006183">
    <property type="term" value="P:GTP biosynthetic process"/>
    <property type="evidence" value="ECO:0007669"/>
    <property type="project" value="InterPro"/>
</dbReference>
<dbReference type="GO" id="GO:0042073">
    <property type="term" value="P:intraciliary transport"/>
    <property type="evidence" value="ECO:0000315"/>
    <property type="project" value="MGI"/>
</dbReference>
<dbReference type="GO" id="GO:0060972">
    <property type="term" value="P:left/right pattern formation"/>
    <property type="evidence" value="ECO:0000315"/>
    <property type="project" value="MGI"/>
</dbReference>
<dbReference type="GO" id="GO:0043113">
    <property type="term" value="P:receptor clustering"/>
    <property type="evidence" value="ECO:0000315"/>
    <property type="project" value="MGI"/>
</dbReference>
<dbReference type="GO" id="GO:0010968">
    <property type="term" value="P:regulation of microtubule nucleation"/>
    <property type="evidence" value="ECO:0007669"/>
    <property type="project" value="Ensembl"/>
</dbReference>
<dbReference type="GO" id="GO:0006228">
    <property type="term" value="P:UTP biosynthetic process"/>
    <property type="evidence" value="ECO:0007669"/>
    <property type="project" value="InterPro"/>
</dbReference>
<dbReference type="CDD" id="cd04415">
    <property type="entry name" value="NDPk7A"/>
    <property type="match status" value="1"/>
</dbReference>
<dbReference type="CDD" id="cd04412">
    <property type="entry name" value="NDPk7B"/>
    <property type="match status" value="1"/>
</dbReference>
<dbReference type="FunFam" id="2.30.29.170:FF:000005">
    <property type="entry name" value="Nucleoside diphosphate kinase 7"/>
    <property type="match status" value="1"/>
</dbReference>
<dbReference type="FunFam" id="3.30.70.141:FF:000004">
    <property type="entry name" value="Nucleoside diphosphate kinase 7"/>
    <property type="match status" value="1"/>
</dbReference>
<dbReference type="FunFam" id="3.30.70.141:FF:000010">
    <property type="entry name" value="Nucleoside diphosphate kinase 7"/>
    <property type="match status" value="1"/>
</dbReference>
<dbReference type="Gene3D" id="2.30.29.170">
    <property type="match status" value="1"/>
</dbReference>
<dbReference type="Gene3D" id="3.30.70.141">
    <property type="entry name" value="Nucleoside diphosphate kinase-like domain"/>
    <property type="match status" value="2"/>
</dbReference>
<dbReference type="InterPro" id="IPR006602">
    <property type="entry name" value="DM10_dom"/>
</dbReference>
<dbReference type="InterPro" id="IPR034907">
    <property type="entry name" value="NDK-like_dom"/>
</dbReference>
<dbReference type="InterPro" id="IPR036850">
    <property type="entry name" value="NDK-like_dom_sf"/>
</dbReference>
<dbReference type="InterPro" id="IPR011410">
    <property type="entry name" value="NDPK7"/>
</dbReference>
<dbReference type="InterPro" id="IPR035525">
    <property type="entry name" value="NDPk7A"/>
</dbReference>
<dbReference type="InterPro" id="IPR037993">
    <property type="entry name" value="NDPk7B"/>
</dbReference>
<dbReference type="InterPro" id="IPR001564">
    <property type="entry name" value="Nucleoside_diP_kinase"/>
</dbReference>
<dbReference type="PANTHER" id="PTHR43109">
    <property type="entry name" value="NUCLEOSIDE DIPHOSPHATE KINASE 7"/>
    <property type="match status" value="1"/>
</dbReference>
<dbReference type="PANTHER" id="PTHR43109:SF2">
    <property type="entry name" value="NUCLEOSIDE DIPHOSPHATE KINASE 7"/>
    <property type="match status" value="1"/>
</dbReference>
<dbReference type="Pfam" id="PF00334">
    <property type="entry name" value="NDK"/>
    <property type="match status" value="2"/>
</dbReference>
<dbReference type="Pfam" id="PF25364">
    <property type="entry name" value="PH_NDK7_N"/>
    <property type="match status" value="1"/>
</dbReference>
<dbReference type="PIRSF" id="PIRSF036503">
    <property type="entry name" value="NDK7"/>
    <property type="match status" value="1"/>
</dbReference>
<dbReference type="PRINTS" id="PR01243">
    <property type="entry name" value="NUCDPKINASE"/>
</dbReference>
<dbReference type="SMART" id="SM00676">
    <property type="entry name" value="DM10"/>
    <property type="match status" value="1"/>
</dbReference>
<dbReference type="SMART" id="SM00562">
    <property type="entry name" value="NDK"/>
    <property type="match status" value="2"/>
</dbReference>
<dbReference type="SUPFAM" id="SSF54919">
    <property type="entry name" value="Nucleoside diphosphate kinase, NDK"/>
    <property type="match status" value="2"/>
</dbReference>
<dbReference type="PROSITE" id="PS51336">
    <property type="entry name" value="DM10"/>
    <property type="match status" value="1"/>
</dbReference>
<dbReference type="PROSITE" id="PS51374">
    <property type="entry name" value="NDPK_LIKE"/>
    <property type="match status" value="2"/>
</dbReference>
<accession>Q9QXL8</accession>
<accession>Q3UMG6</accession>
<feature type="chain" id="PRO_0000137131" description="Nucleoside diphosphate kinase homolog 7">
    <location>
        <begin position="1"/>
        <end position="395"/>
    </location>
</feature>
<feature type="domain" description="DM10" evidence="2">
    <location>
        <begin position="22"/>
        <end position="110"/>
    </location>
</feature>
<feature type="sequence conflict" description="In Ref. 1; AAF20906." evidence="7" ref="1">
    <original>T</original>
    <variation>V</variation>
    <location>
        <position position="50"/>
    </location>
</feature>
<feature type="sequence conflict" description="In Ref. 1; AAF20906." evidence="7" ref="1">
    <original>I</original>
    <variation>N</variation>
    <location>
        <position position="276"/>
    </location>
</feature>
<name>NDK7_MOUSE</name>
<comment type="function">
    <text evidence="1 4 5 6">Possesses an intrinsic kinase activity. Displays 3'-5' exonuclease activity with a preference for single-stranded DNA (By similarity). Does not seem to have nucleoside diphosphate kinase activity (By similarity). Functional component of the gamma-tubulin ring complex, implicated in the regulation of the microtubule-nucleating activity of the gamma-tubulin ring complex in centrosomes, in a kinase activity-dependent manner (By similarity). Part of the dynein-decorated doublet microtubules (DMTs) in cilia axoneme, which is required for motile cilia beating (PubMed:37295417, PubMed:37865089, PubMed:37989994).</text>
</comment>
<comment type="subunit">
    <text evidence="1 4 5 6">Component of sperm flagellar doublet microtubules (PubMed:37295417, PubMed:37865089, PubMed:37989994). Component of the gamma-tubulin ring complex (By similarity).</text>
</comment>
<comment type="subcellular location">
    <subcellularLocation>
        <location evidence="1">Cytoplasm</location>
        <location evidence="1">Cytoskeleton</location>
        <location evidence="1">Microtubule organizing center</location>
        <location evidence="1">Centrosome</location>
    </subcellularLocation>
    <subcellularLocation>
        <location evidence="1">Nucleus</location>
    </subcellularLocation>
    <subcellularLocation>
        <location evidence="1">Cytoplasm</location>
    </subcellularLocation>
    <subcellularLocation>
        <location evidence="1">Cytoplasm</location>
        <location evidence="1">Cytoskeleton</location>
        <location evidence="1">Spindle</location>
    </subcellularLocation>
    <subcellularLocation>
        <location evidence="1">Cytoplasm</location>
        <location evidence="1">Cytoskeleton</location>
        <location evidence="1">Cilium axoneme</location>
    </subcellularLocation>
    <subcellularLocation>
        <location evidence="4 5 6">Cytoplasm</location>
        <location evidence="4 5 6">Cytoskeleton</location>
        <location evidence="4 5 6">Flagellum axoneme</location>
    </subcellularLocation>
    <subcellularLocation>
        <location evidence="1">Cell projection</location>
        <location evidence="1">Cilium</location>
    </subcellularLocation>
    <text evidence="1">Localizes to centrosomes through its assembly into gamma-tubulin ring complex. The centrosomal content of NME7 varies during the cell cycle, being highest in mitosis and lowest in early G1.</text>
</comment>
<comment type="domain">
    <text evidence="1">Contains 2 putative kinase domains (111-243 and 258-391 AA), the first one is involved in autophosphorylation and the other may be inactive.</text>
</comment>
<comment type="disruption phenotype">
    <text evidence="3">Nme7-deficient mice show situs inversus, hydrocephalus and excessive nasal exudates, phenotypes suggestive of primary ciliary dyskinesia.</text>
</comment>
<comment type="similarity">
    <text evidence="7">Belongs to the NDK family.</text>
</comment>
<protein>
    <recommendedName>
        <fullName>Nucleoside diphosphate kinase homolog 7</fullName>
        <shortName>NDK 7</shortName>
        <shortName>NDP kinase homolog 7</shortName>
    </recommendedName>
    <alternativeName>
        <fullName>3'-5' exonuclease NME7</fullName>
        <ecNumber evidence="1">3.1.-.-</ecNumber>
    </alternativeName>
    <alternativeName>
        <fullName>Protein kinase NME7</fullName>
        <ecNumber evidence="1">2.7.-.-</ecNumber>
    </alternativeName>
    <alternativeName>
        <fullName>nm23-H7</fullName>
    </alternativeName>
</protein>
<gene>
    <name evidence="8" type="primary">Nme7</name>
</gene>
<sequence length="395" mass="44435">MRACQQGRSSSLVSPYMAPKNQSERFAFIAEWYDPNASLLRRYELLFYPTDGSVEMHDVKNRRTFLKRTKYEDLRLEDLFIGNKVNVFSRQLVLIDYGDQYTARQLGSRKEKTLALIKPDAVSKAGEIIEMINKSGFTITKLRMMTLTRKEAADFHVDHHSRPFYNELIQFITSGPVIAMEILRDDAICEWKRLLGPANSGLSRTDAPGSIRALFGTDGVRNAAHGPDTFASAAREMELFFPSSGGCGPANTAKFTNCTCCIIKPHAISEGMLGKILIAIRDACFGMSAIQMFNLDRANVEEFYEVYKGVVSEYNDMVTELCSGPCVAIEIQQSNPTKTFREFCGPADPEIARHLRPETLRAIFGKTKVQNAVHCTDLPEDGLLEVQYFFKILDN</sequence>
<evidence type="ECO:0000250" key="1">
    <source>
        <dbReference type="UniProtKB" id="Q9Y5B8"/>
    </source>
</evidence>
<evidence type="ECO:0000255" key="2">
    <source>
        <dbReference type="PROSITE-ProRule" id="PRU00665"/>
    </source>
</evidence>
<evidence type="ECO:0000269" key="3">
    <source>
    </source>
</evidence>
<evidence type="ECO:0000269" key="4">
    <source>
    </source>
</evidence>
<evidence type="ECO:0000269" key="5">
    <source>
    </source>
</evidence>
<evidence type="ECO:0000269" key="6">
    <source>
    </source>
</evidence>
<evidence type="ECO:0000305" key="7"/>
<evidence type="ECO:0000312" key="8">
    <source>
        <dbReference type="MGI" id="MGI:2449121"/>
    </source>
</evidence>
<evidence type="ECO:0007744" key="9">
    <source>
        <dbReference type="PDB" id="8I7R"/>
    </source>
</evidence>
<evidence type="ECO:0007744" key="10">
    <source>
        <dbReference type="PDB" id="8IYJ"/>
    </source>
</evidence>
<evidence type="ECO:0007744" key="11">
    <source>
        <dbReference type="PDB" id="8TO0"/>
    </source>
</evidence>